<organism>
    <name type="scientific">Haemophilus influenzae (strain PittEE)</name>
    <dbReference type="NCBI Taxonomy" id="374930"/>
    <lineage>
        <taxon>Bacteria</taxon>
        <taxon>Pseudomonadati</taxon>
        <taxon>Pseudomonadota</taxon>
        <taxon>Gammaproteobacteria</taxon>
        <taxon>Pasteurellales</taxon>
        <taxon>Pasteurellaceae</taxon>
        <taxon>Haemophilus</taxon>
    </lineage>
</organism>
<accession>A5UE63</accession>
<dbReference type="EMBL" id="CP000671">
    <property type="protein sequence ID" value="ABQ99064.1"/>
    <property type="molecule type" value="Genomic_DNA"/>
</dbReference>
<dbReference type="SMR" id="A5UE63"/>
<dbReference type="KEGG" id="hip:CGSHiEE_08835"/>
<dbReference type="HOGENOM" id="CLU_171174_2_0_6"/>
<dbReference type="GO" id="GO:0005737">
    <property type="term" value="C:cytoplasm"/>
    <property type="evidence" value="ECO:0007669"/>
    <property type="project" value="UniProtKB-SubCell"/>
</dbReference>
<dbReference type="GO" id="GO:0000917">
    <property type="term" value="P:division septum assembly"/>
    <property type="evidence" value="ECO:0007669"/>
    <property type="project" value="UniProtKB-KW"/>
</dbReference>
<dbReference type="GO" id="GO:0043093">
    <property type="term" value="P:FtsZ-dependent cytokinesis"/>
    <property type="evidence" value="ECO:0007669"/>
    <property type="project" value="UniProtKB-UniRule"/>
</dbReference>
<dbReference type="Gene3D" id="1.20.5.340">
    <property type="match status" value="1"/>
</dbReference>
<dbReference type="HAMAP" id="MF_01196">
    <property type="entry name" value="ZapB"/>
    <property type="match status" value="1"/>
</dbReference>
<dbReference type="InterPro" id="IPR009252">
    <property type="entry name" value="Cell_div_ZapB"/>
</dbReference>
<dbReference type="Pfam" id="PF06005">
    <property type="entry name" value="ZapB"/>
    <property type="match status" value="1"/>
</dbReference>
<feature type="chain" id="PRO_0000333905" description="Cell division protein ZapB">
    <location>
        <begin position="1"/>
        <end position="72"/>
    </location>
</feature>
<feature type="coiled-coil region" evidence="1">
    <location>
        <begin position="1"/>
        <end position="71"/>
    </location>
</feature>
<keyword id="KW-0131">Cell cycle</keyword>
<keyword id="KW-0132">Cell division</keyword>
<keyword id="KW-0175">Coiled coil</keyword>
<keyword id="KW-0963">Cytoplasm</keyword>
<keyword id="KW-0717">Septation</keyword>
<comment type="function">
    <text evidence="1">Non-essential, abundant cell division factor that is required for proper Z-ring formation. It is recruited early to the divisome by direct interaction with FtsZ, stimulating Z-ring assembly and thereby promoting cell division earlier in the cell cycle. Its recruitment to the Z-ring requires functional FtsA or ZipA.</text>
</comment>
<comment type="subunit">
    <text evidence="1">Homodimer. The ends of the coiled-coil dimer bind to each other, forming polymers. Interacts with FtsZ.</text>
</comment>
<comment type="subcellular location">
    <subcellularLocation>
        <location>Cytoplasm</location>
    </subcellularLocation>
    <text evidence="1">Localizes to the septum at mid-cell, in a FtsZ-like pattern.</text>
</comment>
<comment type="similarity">
    <text evidence="1">Belongs to the ZapB family.</text>
</comment>
<protein>
    <recommendedName>
        <fullName evidence="1">Cell division protein ZapB</fullName>
    </recommendedName>
</protein>
<name>ZAPB_HAEIE</name>
<evidence type="ECO:0000255" key="1">
    <source>
        <dbReference type="HAMAP-Rule" id="MF_01196"/>
    </source>
</evidence>
<gene>
    <name evidence="1" type="primary">zapB</name>
    <name type="ordered locus">CGSHiEE_08835</name>
</gene>
<proteinExistence type="inferred from homology"/>
<reference key="1">
    <citation type="journal article" date="2007" name="Genome Biol.">
        <title>Characterization and modeling of the Haemophilus influenzae core and supragenomes based on the complete genomic sequences of Rd and 12 clinical nontypeable strains.</title>
        <authorList>
            <person name="Hogg J.S."/>
            <person name="Hu F.Z."/>
            <person name="Janto B."/>
            <person name="Boissy R."/>
            <person name="Hayes J."/>
            <person name="Keefe R."/>
            <person name="Post J.C."/>
            <person name="Ehrlich G.D."/>
        </authorList>
    </citation>
    <scope>NUCLEOTIDE SEQUENCE [LARGE SCALE GENOMIC DNA]</scope>
    <source>
        <strain>PittEE</strain>
    </source>
</reference>
<sequence length="72" mass="8627">MSLEILDQLEEKIKQAVETIQLLQLEVEELKEKNAESQRNIENLQTENEQLKNEHRNWQEHIRSLLGKFDNV</sequence>